<proteinExistence type="inferred from homology"/>
<protein>
    <recommendedName>
        <fullName evidence="1">Formyltetrahydrofolate deformylase</fullName>
        <ecNumber evidence="1">3.5.1.10</ecNumber>
    </recommendedName>
    <alternativeName>
        <fullName evidence="1">Formyl-FH(4) hydrolase</fullName>
    </alternativeName>
</protein>
<keyword id="KW-0378">Hydrolase</keyword>
<keyword id="KW-0554">One-carbon metabolism</keyword>
<keyword id="KW-0658">Purine biosynthesis</keyword>
<keyword id="KW-1185">Reference proteome</keyword>
<comment type="function">
    <text evidence="1">Catalyzes the hydrolysis of 10-formyltetrahydrofolate (formyl-FH4) to formate and tetrahydrofolate (FH4).</text>
</comment>
<comment type="catalytic activity">
    <reaction evidence="1">
        <text>(6R)-10-formyltetrahydrofolate + H2O = (6S)-5,6,7,8-tetrahydrofolate + formate + H(+)</text>
        <dbReference type="Rhea" id="RHEA:19833"/>
        <dbReference type="ChEBI" id="CHEBI:15377"/>
        <dbReference type="ChEBI" id="CHEBI:15378"/>
        <dbReference type="ChEBI" id="CHEBI:15740"/>
        <dbReference type="ChEBI" id="CHEBI:57453"/>
        <dbReference type="ChEBI" id="CHEBI:195366"/>
        <dbReference type="EC" id="3.5.1.10"/>
    </reaction>
</comment>
<comment type="pathway">
    <text evidence="1">Purine metabolism; IMP biosynthesis via de novo pathway; formate from 10-formyl-5,6,7,8-tetrahydrofolate: step 1/1.</text>
</comment>
<comment type="similarity">
    <text evidence="1">Belongs to the PurU family.</text>
</comment>
<accession>P0A5T7</accession>
<accession>A0A1R3Y2Q4</accession>
<accession>Q50453</accession>
<accession>X2BMP9</accession>
<reference key="1">
    <citation type="journal article" date="2003" name="Proc. Natl. Acad. Sci. U.S.A.">
        <title>The complete genome sequence of Mycobacterium bovis.</title>
        <authorList>
            <person name="Garnier T."/>
            <person name="Eiglmeier K."/>
            <person name="Camus J.-C."/>
            <person name="Medina N."/>
            <person name="Mansoor H."/>
            <person name="Pryor M."/>
            <person name="Duthoy S."/>
            <person name="Grondin S."/>
            <person name="Lacroix C."/>
            <person name="Monsempe C."/>
            <person name="Simon S."/>
            <person name="Harris B."/>
            <person name="Atkin R."/>
            <person name="Doggett J."/>
            <person name="Mayes R."/>
            <person name="Keating L."/>
            <person name="Wheeler P.R."/>
            <person name="Parkhill J."/>
            <person name="Barrell B.G."/>
            <person name="Cole S.T."/>
            <person name="Gordon S.V."/>
            <person name="Hewinson R.G."/>
        </authorList>
    </citation>
    <scope>NUCLEOTIDE SEQUENCE [LARGE SCALE GENOMIC DNA]</scope>
    <source>
        <strain>ATCC BAA-935 / AF2122/97</strain>
    </source>
</reference>
<reference key="2">
    <citation type="journal article" date="2017" name="Genome Announc.">
        <title>Updated reference genome sequence and annotation of Mycobacterium bovis AF2122/97.</title>
        <authorList>
            <person name="Malone K.M."/>
            <person name="Farrell D."/>
            <person name="Stuber T.P."/>
            <person name="Schubert O.T."/>
            <person name="Aebersold R."/>
            <person name="Robbe-Austerman S."/>
            <person name="Gordon S.V."/>
        </authorList>
    </citation>
    <scope>NUCLEOTIDE SEQUENCE [LARGE SCALE GENOMIC DNA]</scope>
    <scope>GENOME REANNOTATION</scope>
    <source>
        <strain>ATCC BAA-935 / AF2122/97</strain>
    </source>
</reference>
<sequence length="310" mass="34006">MGKGSMTAHATPNEPDYPPPPGGPPPPADIGRLLLRCHDRPGIIAAVSTFLARAGANIISLDQHSTAPEGGTFLQRAIFHLPGLTAAVDELQRDFGSTVADKFGIDYRFAEAAKPKRVAIMASTEDHCLLDLLWRNRRGELEMSVVMVIANHPDLAAHVRPFGVPFIHIPATRDTRTEAEQRQLQLLSGNVDLVVLARYMQILSPGFLEAIGCPLINIHHSFLPAFTGAAPYQRARERGVKLIGATAHYVTEVLDEGPIIEQDVVRVDHTHTVDDLVRVGADVERAVLSRAVLWHCQDRVIVHHNQTIVF</sequence>
<gene>
    <name evidence="1" type="primary">purU</name>
    <name type="ordered locus">BQ2027_MB2988</name>
</gene>
<dbReference type="EC" id="3.5.1.10" evidence="1"/>
<dbReference type="EMBL" id="LT708304">
    <property type="protein sequence ID" value="SIU01611.1"/>
    <property type="molecule type" value="Genomic_DNA"/>
</dbReference>
<dbReference type="RefSeq" id="NP_856633.1">
    <property type="nucleotide sequence ID" value="NC_002945.3"/>
</dbReference>
<dbReference type="RefSeq" id="WP_003899559.1">
    <property type="nucleotide sequence ID" value="NC_002945.4"/>
</dbReference>
<dbReference type="SMR" id="P0A5T7"/>
<dbReference type="GeneID" id="45426952"/>
<dbReference type="KEGG" id="mbo:BQ2027_MB2988"/>
<dbReference type="PATRIC" id="fig|233413.5.peg.3284"/>
<dbReference type="UniPathway" id="UPA00074">
    <property type="reaction ID" value="UER00170"/>
</dbReference>
<dbReference type="Proteomes" id="UP000001419">
    <property type="component" value="Chromosome"/>
</dbReference>
<dbReference type="GO" id="GO:0008864">
    <property type="term" value="F:formyltetrahydrofolate deformylase activity"/>
    <property type="evidence" value="ECO:0007669"/>
    <property type="project" value="UniProtKB-UniRule"/>
</dbReference>
<dbReference type="GO" id="GO:0006189">
    <property type="term" value="P:'de novo' IMP biosynthetic process"/>
    <property type="evidence" value="ECO:0007669"/>
    <property type="project" value="UniProtKB-UniRule"/>
</dbReference>
<dbReference type="GO" id="GO:0006730">
    <property type="term" value="P:one-carbon metabolic process"/>
    <property type="evidence" value="ECO:0007669"/>
    <property type="project" value="UniProtKB-KW"/>
</dbReference>
<dbReference type="CDD" id="cd04875">
    <property type="entry name" value="ACT_F4HF-DF"/>
    <property type="match status" value="1"/>
</dbReference>
<dbReference type="CDD" id="cd08648">
    <property type="entry name" value="FMT_core_Formyl-FH4-Hydrolase_C"/>
    <property type="match status" value="1"/>
</dbReference>
<dbReference type="Gene3D" id="3.30.70.260">
    <property type="match status" value="1"/>
</dbReference>
<dbReference type="Gene3D" id="3.40.50.170">
    <property type="entry name" value="Formyl transferase, N-terminal domain"/>
    <property type="match status" value="1"/>
</dbReference>
<dbReference type="HAMAP" id="MF_01927">
    <property type="entry name" value="PurU"/>
    <property type="match status" value="1"/>
</dbReference>
<dbReference type="InterPro" id="IPR045865">
    <property type="entry name" value="ACT-like_dom_sf"/>
</dbReference>
<dbReference type="InterPro" id="IPR002912">
    <property type="entry name" value="ACT_dom"/>
</dbReference>
<dbReference type="InterPro" id="IPR041729">
    <property type="entry name" value="Formyl-FH4-Hydrolase_C"/>
</dbReference>
<dbReference type="InterPro" id="IPR002376">
    <property type="entry name" value="Formyl_transf_N"/>
</dbReference>
<dbReference type="InterPro" id="IPR036477">
    <property type="entry name" value="Formyl_transf_N_sf"/>
</dbReference>
<dbReference type="InterPro" id="IPR004810">
    <property type="entry name" value="PurU"/>
</dbReference>
<dbReference type="InterPro" id="IPR044074">
    <property type="entry name" value="PurU_ACT"/>
</dbReference>
<dbReference type="NCBIfam" id="NF004684">
    <property type="entry name" value="PRK06027.1"/>
    <property type="match status" value="1"/>
</dbReference>
<dbReference type="NCBIfam" id="TIGR00655">
    <property type="entry name" value="PurU"/>
    <property type="match status" value="1"/>
</dbReference>
<dbReference type="PANTHER" id="PTHR42706">
    <property type="entry name" value="FORMYLTETRAHYDROFOLATE DEFORMYLASE"/>
    <property type="match status" value="1"/>
</dbReference>
<dbReference type="PANTHER" id="PTHR42706:SF1">
    <property type="entry name" value="FORMYLTETRAHYDROFOLATE DEFORMYLASE 2, MITOCHONDRIAL"/>
    <property type="match status" value="1"/>
</dbReference>
<dbReference type="Pfam" id="PF01842">
    <property type="entry name" value="ACT"/>
    <property type="match status" value="1"/>
</dbReference>
<dbReference type="Pfam" id="PF00551">
    <property type="entry name" value="Formyl_trans_N"/>
    <property type="match status" value="1"/>
</dbReference>
<dbReference type="PIRSF" id="PIRSF036480">
    <property type="entry name" value="FormyFH4_hydr"/>
    <property type="match status" value="1"/>
</dbReference>
<dbReference type="PRINTS" id="PR01575">
    <property type="entry name" value="FFH4HYDRLASE"/>
</dbReference>
<dbReference type="SUPFAM" id="SSF55021">
    <property type="entry name" value="ACT-like"/>
    <property type="match status" value="1"/>
</dbReference>
<dbReference type="SUPFAM" id="SSF53328">
    <property type="entry name" value="Formyltransferase"/>
    <property type="match status" value="1"/>
</dbReference>
<dbReference type="PROSITE" id="PS51671">
    <property type="entry name" value="ACT"/>
    <property type="match status" value="1"/>
</dbReference>
<name>PURU_MYCBO</name>
<feature type="chain" id="PRO_0000074965" description="Formyltetrahydrofolate deformylase">
    <location>
        <begin position="1"/>
        <end position="310"/>
    </location>
</feature>
<feature type="domain" description="ACT" evidence="1">
    <location>
        <begin position="32"/>
        <end position="108"/>
    </location>
</feature>
<feature type="region of interest" description="Disordered" evidence="2">
    <location>
        <begin position="1"/>
        <end position="30"/>
    </location>
</feature>
<feature type="compositionally biased region" description="Pro residues" evidence="2">
    <location>
        <begin position="15"/>
        <end position="28"/>
    </location>
</feature>
<feature type="active site" evidence="1">
    <location>
        <position position="255"/>
    </location>
</feature>
<evidence type="ECO:0000255" key="1">
    <source>
        <dbReference type="HAMAP-Rule" id="MF_01927"/>
    </source>
</evidence>
<evidence type="ECO:0000256" key="2">
    <source>
        <dbReference type="SAM" id="MobiDB-lite"/>
    </source>
</evidence>
<organism>
    <name type="scientific">Mycobacterium bovis (strain ATCC BAA-935 / AF2122/97)</name>
    <dbReference type="NCBI Taxonomy" id="233413"/>
    <lineage>
        <taxon>Bacteria</taxon>
        <taxon>Bacillati</taxon>
        <taxon>Actinomycetota</taxon>
        <taxon>Actinomycetes</taxon>
        <taxon>Mycobacteriales</taxon>
        <taxon>Mycobacteriaceae</taxon>
        <taxon>Mycobacterium</taxon>
        <taxon>Mycobacterium tuberculosis complex</taxon>
    </lineage>
</organism>